<sequence>MTKLLVGLGNPGDKYFETKHNVGFMLIDQLAKKQNVTFTHDKIFQADLASFFLNGEKIYLVKPTTFMNESGKAVHALLTYYGLDIDDLLIIYDDLDMEVGKIRLRAKGSAGGHNGIKSIIQHIGTQVFNRVKIGIGRPKNGMSVVHHVLSKFDRDDYIGILQSIDKVDDSVNYYLQEKNFEKTMQRYNG</sequence>
<feature type="chain" id="PRO_1000118411" description="Peptidyl-tRNA hydrolase">
    <location>
        <begin position="1"/>
        <end position="189"/>
    </location>
</feature>
<feature type="active site" description="Proton acceptor" evidence="1">
    <location>
        <position position="20"/>
    </location>
</feature>
<feature type="binding site" evidence="1">
    <location>
        <position position="15"/>
    </location>
    <ligand>
        <name>tRNA</name>
        <dbReference type="ChEBI" id="CHEBI:17843"/>
    </ligand>
</feature>
<feature type="binding site" evidence="1">
    <location>
        <position position="66"/>
    </location>
    <ligand>
        <name>tRNA</name>
        <dbReference type="ChEBI" id="CHEBI:17843"/>
    </ligand>
</feature>
<feature type="binding site" evidence="1">
    <location>
        <position position="68"/>
    </location>
    <ligand>
        <name>tRNA</name>
        <dbReference type="ChEBI" id="CHEBI:17843"/>
    </ligand>
</feature>
<feature type="binding site" evidence="1">
    <location>
        <position position="114"/>
    </location>
    <ligand>
        <name>tRNA</name>
        <dbReference type="ChEBI" id="CHEBI:17843"/>
    </ligand>
</feature>
<feature type="site" description="Discriminates between blocked and unblocked aminoacyl-tRNA" evidence="1">
    <location>
        <position position="10"/>
    </location>
</feature>
<feature type="site" description="Stabilizes the basic form of H active site to accept a proton" evidence="1">
    <location>
        <position position="93"/>
    </location>
</feature>
<organism>
    <name type="scientific">Streptococcus pneumoniae (strain ATCC 700669 / Spain 23F-1)</name>
    <dbReference type="NCBI Taxonomy" id="561276"/>
    <lineage>
        <taxon>Bacteria</taxon>
        <taxon>Bacillati</taxon>
        <taxon>Bacillota</taxon>
        <taxon>Bacilli</taxon>
        <taxon>Lactobacillales</taxon>
        <taxon>Streptococcaceae</taxon>
        <taxon>Streptococcus</taxon>
    </lineage>
</organism>
<protein>
    <recommendedName>
        <fullName evidence="1">Peptidyl-tRNA hydrolase</fullName>
        <shortName evidence="1">Pth</shortName>
        <ecNumber evidence="1">3.1.1.29</ecNumber>
    </recommendedName>
</protein>
<proteinExistence type="inferred from homology"/>
<evidence type="ECO:0000255" key="1">
    <source>
        <dbReference type="HAMAP-Rule" id="MF_00083"/>
    </source>
</evidence>
<accession>B8ZJI3</accession>
<gene>
    <name evidence="1" type="primary">pth</name>
    <name type="ordered locus">SPN23F00050</name>
</gene>
<keyword id="KW-0963">Cytoplasm</keyword>
<keyword id="KW-0378">Hydrolase</keyword>
<keyword id="KW-0694">RNA-binding</keyword>
<keyword id="KW-0820">tRNA-binding</keyword>
<name>PTH_STRPJ</name>
<dbReference type="EC" id="3.1.1.29" evidence="1"/>
<dbReference type="EMBL" id="FM211187">
    <property type="protein sequence ID" value="CAR67871.1"/>
    <property type="molecule type" value="Genomic_DNA"/>
</dbReference>
<dbReference type="RefSeq" id="WP_000163930.1">
    <property type="nucleotide sequence ID" value="NC_011900.1"/>
</dbReference>
<dbReference type="SMR" id="B8ZJI3"/>
<dbReference type="KEGG" id="sne:SPN23F00050"/>
<dbReference type="HOGENOM" id="CLU_062456_4_1_9"/>
<dbReference type="GO" id="GO:0005737">
    <property type="term" value="C:cytoplasm"/>
    <property type="evidence" value="ECO:0007669"/>
    <property type="project" value="UniProtKB-SubCell"/>
</dbReference>
<dbReference type="GO" id="GO:0004045">
    <property type="term" value="F:peptidyl-tRNA hydrolase activity"/>
    <property type="evidence" value="ECO:0007669"/>
    <property type="project" value="UniProtKB-UniRule"/>
</dbReference>
<dbReference type="GO" id="GO:0000049">
    <property type="term" value="F:tRNA binding"/>
    <property type="evidence" value="ECO:0007669"/>
    <property type="project" value="UniProtKB-UniRule"/>
</dbReference>
<dbReference type="GO" id="GO:0006515">
    <property type="term" value="P:protein quality control for misfolded or incompletely synthesized proteins"/>
    <property type="evidence" value="ECO:0007669"/>
    <property type="project" value="UniProtKB-UniRule"/>
</dbReference>
<dbReference type="GO" id="GO:0072344">
    <property type="term" value="P:rescue of stalled ribosome"/>
    <property type="evidence" value="ECO:0007669"/>
    <property type="project" value="UniProtKB-UniRule"/>
</dbReference>
<dbReference type="CDD" id="cd00462">
    <property type="entry name" value="PTH"/>
    <property type="match status" value="1"/>
</dbReference>
<dbReference type="FunFam" id="3.40.50.1470:FF:000001">
    <property type="entry name" value="Peptidyl-tRNA hydrolase"/>
    <property type="match status" value="1"/>
</dbReference>
<dbReference type="Gene3D" id="3.40.50.1470">
    <property type="entry name" value="Peptidyl-tRNA hydrolase"/>
    <property type="match status" value="1"/>
</dbReference>
<dbReference type="HAMAP" id="MF_00083">
    <property type="entry name" value="Pept_tRNA_hydro_bact"/>
    <property type="match status" value="1"/>
</dbReference>
<dbReference type="InterPro" id="IPR001328">
    <property type="entry name" value="Pept_tRNA_hydro"/>
</dbReference>
<dbReference type="InterPro" id="IPR018171">
    <property type="entry name" value="Pept_tRNA_hydro_CS"/>
</dbReference>
<dbReference type="InterPro" id="IPR036416">
    <property type="entry name" value="Pept_tRNA_hydro_sf"/>
</dbReference>
<dbReference type="NCBIfam" id="TIGR00447">
    <property type="entry name" value="pth"/>
    <property type="match status" value="1"/>
</dbReference>
<dbReference type="PANTHER" id="PTHR17224">
    <property type="entry name" value="PEPTIDYL-TRNA HYDROLASE"/>
    <property type="match status" value="1"/>
</dbReference>
<dbReference type="PANTHER" id="PTHR17224:SF1">
    <property type="entry name" value="PEPTIDYL-TRNA HYDROLASE"/>
    <property type="match status" value="1"/>
</dbReference>
<dbReference type="Pfam" id="PF01195">
    <property type="entry name" value="Pept_tRNA_hydro"/>
    <property type="match status" value="1"/>
</dbReference>
<dbReference type="SUPFAM" id="SSF53178">
    <property type="entry name" value="Peptidyl-tRNA hydrolase-like"/>
    <property type="match status" value="1"/>
</dbReference>
<dbReference type="PROSITE" id="PS01195">
    <property type="entry name" value="PEPT_TRNA_HYDROL_1"/>
    <property type="match status" value="1"/>
</dbReference>
<dbReference type="PROSITE" id="PS01196">
    <property type="entry name" value="PEPT_TRNA_HYDROL_2"/>
    <property type="match status" value="1"/>
</dbReference>
<comment type="function">
    <text evidence="1">Hydrolyzes ribosome-free peptidyl-tRNAs (with 1 or more amino acids incorporated), which drop off the ribosome during protein synthesis, or as a result of ribosome stalling.</text>
</comment>
<comment type="function">
    <text evidence="1">Catalyzes the release of premature peptidyl moieties from peptidyl-tRNA molecules trapped in stalled 50S ribosomal subunits, and thus maintains levels of free tRNAs and 50S ribosomes.</text>
</comment>
<comment type="catalytic activity">
    <reaction evidence="1">
        <text>an N-acyl-L-alpha-aminoacyl-tRNA + H2O = an N-acyl-L-amino acid + a tRNA + H(+)</text>
        <dbReference type="Rhea" id="RHEA:54448"/>
        <dbReference type="Rhea" id="RHEA-COMP:10123"/>
        <dbReference type="Rhea" id="RHEA-COMP:13883"/>
        <dbReference type="ChEBI" id="CHEBI:15377"/>
        <dbReference type="ChEBI" id="CHEBI:15378"/>
        <dbReference type="ChEBI" id="CHEBI:59874"/>
        <dbReference type="ChEBI" id="CHEBI:78442"/>
        <dbReference type="ChEBI" id="CHEBI:138191"/>
        <dbReference type="EC" id="3.1.1.29"/>
    </reaction>
</comment>
<comment type="subunit">
    <text evidence="1">Monomer.</text>
</comment>
<comment type="subcellular location">
    <subcellularLocation>
        <location evidence="1">Cytoplasm</location>
    </subcellularLocation>
</comment>
<comment type="similarity">
    <text evidence="1">Belongs to the PTH family.</text>
</comment>
<reference key="1">
    <citation type="journal article" date="2009" name="J. Bacteriol.">
        <title>Role of conjugative elements in the evolution of the multidrug-resistant pandemic clone Streptococcus pneumoniae Spain23F ST81.</title>
        <authorList>
            <person name="Croucher N.J."/>
            <person name="Walker D."/>
            <person name="Romero P."/>
            <person name="Lennard N."/>
            <person name="Paterson G.K."/>
            <person name="Bason N.C."/>
            <person name="Mitchell A.M."/>
            <person name="Quail M.A."/>
            <person name="Andrew P.W."/>
            <person name="Parkhill J."/>
            <person name="Bentley S.D."/>
            <person name="Mitchell T.J."/>
        </authorList>
    </citation>
    <scope>NUCLEOTIDE SEQUENCE [LARGE SCALE GENOMIC DNA]</scope>
    <source>
        <strain>ATCC 700669 / Spain 23F-1</strain>
    </source>
</reference>